<proteinExistence type="evidence at protein level"/>
<feature type="chain" id="PRO_0000447173" description="Protein YtiB">
    <location>
        <begin position="1"/>
        <end position="18"/>
    </location>
</feature>
<protein>
    <recommendedName>
        <fullName evidence="2">Protein YtiB</fullName>
    </recommendedName>
</protein>
<comment type="induction">
    <text evidence="1">Expressed at low levels in exponential phase in rich medium (at protein level).</text>
</comment>
<accession>P0DSE5</accession>
<accession>A0A7H2C773</accession>
<dbReference type="EMBL" id="U00096">
    <property type="protein sequence ID" value="QNV50520.1"/>
    <property type="molecule type" value="Genomic_DNA"/>
</dbReference>
<dbReference type="InParanoid" id="P0DSE5"/>
<dbReference type="BioCyc" id="EcoCyc:MONOMER0-4480"/>
<dbReference type="Proteomes" id="UP000000625">
    <property type="component" value="Chromosome"/>
</dbReference>
<reference key="1">
    <citation type="journal article" date="1997" name="Science">
        <title>The complete genome sequence of Escherichia coli K-12.</title>
        <authorList>
            <person name="Blattner F.R."/>
            <person name="Plunkett G. III"/>
            <person name="Bloch C.A."/>
            <person name="Perna N.T."/>
            <person name="Burland V."/>
            <person name="Riley M."/>
            <person name="Collado-Vides J."/>
            <person name="Glasner J.D."/>
            <person name="Rode C.K."/>
            <person name="Mayhew G.F."/>
            <person name="Gregor J."/>
            <person name="Davis N.W."/>
            <person name="Kirkpatrick H.A."/>
            <person name="Goeden M.A."/>
            <person name="Rose D.J."/>
            <person name="Mau B."/>
            <person name="Shao Y."/>
        </authorList>
    </citation>
    <scope>NUCLEOTIDE SEQUENCE [LARGE SCALE GENOMIC DNA]</scope>
    <source>
        <strain>K12 / MG1655 / ATCC 47076</strain>
    </source>
</reference>
<reference key="2">
    <citation type="journal article" date="2019" name="MBio">
        <title>Identifying small proteins by ribosome profiling with stalled initiation complexes.</title>
        <authorList>
            <person name="Weaver J."/>
            <person name="Mohammad F."/>
            <person name="Buskirk A.R."/>
            <person name="Storz G."/>
        </authorList>
    </citation>
    <scope>IDENTIFICATION</scope>
    <scope>INDUCTION</scope>
    <source>
        <strain>K12 / MG1655 / ATCC 47076</strain>
    </source>
</reference>
<keyword id="KW-1185">Reference proteome</keyword>
<gene>
    <name evidence="2" type="primary">ytiB</name>
    <name evidence="3" type="ordered locus">b4767</name>
</gene>
<evidence type="ECO:0000269" key="1">
    <source>
    </source>
</evidence>
<evidence type="ECO:0000303" key="2">
    <source>
    </source>
</evidence>
<evidence type="ECO:0000312" key="3">
    <source>
        <dbReference type="EMBL" id="QNV50520.1"/>
    </source>
</evidence>
<sequence>MIGINVAIFTNVQRRTVS</sequence>
<organism>
    <name type="scientific">Escherichia coli (strain K12)</name>
    <dbReference type="NCBI Taxonomy" id="83333"/>
    <lineage>
        <taxon>Bacteria</taxon>
        <taxon>Pseudomonadati</taxon>
        <taxon>Pseudomonadota</taxon>
        <taxon>Gammaproteobacteria</taxon>
        <taxon>Enterobacterales</taxon>
        <taxon>Enterobacteriaceae</taxon>
        <taxon>Escherichia</taxon>
    </lineage>
</organism>
<name>YTIB_ECOLI</name>